<proteinExistence type="evidence at transcript level"/>
<feature type="chain" id="PRO_0000327228" description="CCR4-NOT transcription complex subunit 9">
    <location>
        <begin position="1"/>
        <end position="299"/>
    </location>
</feature>
<feature type="modified residue" description="N-acetylmethionine" evidence="2">
    <location>
        <position position="1"/>
    </location>
</feature>
<feature type="sequence conflict" description="In Ref. 1; CAH92464." evidence="4" ref="1">
    <original>Y</original>
    <variation>H</variation>
    <location>
        <position position="23"/>
    </location>
</feature>
<feature type="sequence conflict" description="In Ref. 1; CAH91806." evidence="4" ref="1">
    <original>Q</original>
    <variation>L</variation>
    <location>
        <position position="68"/>
    </location>
</feature>
<protein>
    <recommendedName>
        <fullName evidence="2">CCR4-NOT transcription complex subunit 9</fullName>
    </recommendedName>
    <alternativeName>
        <fullName>Cell differentiation protein RQCD1 homolog</fullName>
        <shortName>Rcd-1</shortName>
    </alternativeName>
</protein>
<name>CNOT9_PONAB</name>
<accession>Q5R6Z6</accession>
<accession>Q5R8V4</accession>
<dbReference type="EMBL" id="CR859645">
    <property type="protein sequence ID" value="CAH91806.1"/>
    <property type="molecule type" value="mRNA"/>
</dbReference>
<dbReference type="EMBL" id="CR860327">
    <property type="protein sequence ID" value="CAH92464.1"/>
    <property type="molecule type" value="mRNA"/>
</dbReference>
<dbReference type="RefSeq" id="NP_001126453.1">
    <property type="nucleotide sequence ID" value="NM_001132981.1"/>
</dbReference>
<dbReference type="SMR" id="Q5R6Z6"/>
<dbReference type="FunCoup" id="Q5R6Z6">
    <property type="interactions" value="2064"/>
</dbReference>
<dbReference type="STRING" id="9601.ENSPPYP00000014723"/>
<dbReference type="Ensembl" id="ENSPPYT00000059560.1">
    <property type="protein sequence ID" value="ENSPPYP00000043942.1"/>
    <property type="gene ID" value="ENSPPYG00000036751.1"/>
</dbReference>
<dbReference type="GeneID" id="100173439"/>
<dbReference type="KEGG" id="pon:100173439"/>
<dbReference type="CTD" id="9125"/>
<dbReference type="eggNOG" id="KOG3036">
    <property type="taxonomic scope" value="Eukaryota"/>
</dbReference>
<dbReference type="GeneTree" id="ENSGT00390000001225"/>
<dbReference type="HOGENOM" id="CLU_039962_2_0_1"/>
<dbReference type="InParanoid" id="Q5R6Z6"/>
<dbReference type="OrthoDB" id="1183224at2759"/>
<dbReference type="TreeFam" id="TF105734"/>
<dbReference type="Proteomes" id="UP000001595">
    <property type="component" value="Chromosome 2B"/>
</dbReference>
<dbReference type="GO" id="GO:0030014">
    <property type="term" value="C:CCR4-NOT complex"/>
    <property type="evidence" value="ECO:0000250"/>
    <property type="project" value="UniProtKB"/>
</dbReference>
<dbReference type="GO" id="GO:0005634">
    <property type="term" value="C:nucleus"/>
    <property type="evidence" value="ECO:0007669"/>
    <property type="project" value="UniProtKB-SubCell"/>
</dbReference>
<dbReference type="GO" id="GO:0000932">
    <property type="term" value="C:P-body"/>
    <property type="evidence" value="ECO:0000250"/>
    <property type="project" value="UniProtKB"/>
</dbReference>
<dbReference type="GO" id="GO:0003713">
    <property type="term" value="F:transcription coactivator activity"/>
    <property type="evidence" value="ECO:0000250"/>
    <property type="project" value="UniProtKB"/>
</dbReference>
<dbReference type="GO" id="GO:0006402">
    <property type="term" value="P:mRNA catabolic process"/>
    <property type="evidence" value="ECO:0007669"/>
    <property type="project" value="InterPro"/>
</dbReference>
<dbReference type="GO" id="GO:0033147">
    <property type="term" value="P:negative regulation of intracellular estrogen receptor signaling pathway"/>
    <property type="evidence" value="ECO:0000250"/>
    <property type="project" value="UniProtKB"/>
</dbReference>
<dbReference type="GO" id="GO:0006417">
    <property type="term" value="P:regulation of translation"/>
    <property type="evidence" value="ECO:0007669"/>
    <property type="project" value="UniProtKB-KW"/>
</dbReference>
<dbReference type="GO" id="GO:0031047">
    <property type="term" value="P:regulatory ncRNA-mediated gene silencing"/>
    <property type="evidence" value="ECO:0007669"/>
    <property type="project" value="UniProtKB-KW"/>
</dbReference>
<dbReference type="FunFam" id="1.25.10.10:FF:000037">
    <property type="entry name" value="CCR4-NOT transcription complex subunit 9"/>
    <property type="match status" value="1"/>
</dbReference>
<dbReference type="Gene3D" id="1.25.10.10">
    <property type="entry name" value="Leucine-rich Repeat Variant"/>
    <property type="match status" value="1"/>
</dbReference>
<dbReference type="InterPro" id="IPR011989">
    <property type="entry name" value="ARM-like"/>
</dbReference>
<dbReference type="InterPro" id="IPR016024">
    <property type="entry name" value="ARM-type_fold"/>
</dbReference>
<dbReference type="InterPro" id="IPR007216">
    <property type="entry name" value="CNOT9"/>
</dbReference>
<dbReference type="PANTHER" id="PTHR12262">
    <property type="entry name" value="CCR4-NOT TRANSCRIPTION COMPLEX SUBUNIT 9"/>
    <property type="match status" value="1"/>
</dbReference>
<dbReference type="Pfam" id="PF04078">
    <property type="entry name" value="Rcd1"/>
    <property type="match status" value="1"/>
</dbReference>
<dbReference type="SUPFAM" id="SSF48371">
    <property type="entry name" value="ARM repeat"/>
    <property type="match status" value="1"/>
</dbReference>
<reference key="1">
    <citation type="submission" date="2004-11" db="EMBL/GenBank/DDBJ databases">
        <authorList>
            <consortium name="The German cDNA consortium"/>
        </authorList>
    </citation>
    <scope>NUCLEOTIDE SEQUENCE [LARGE SCALE MRNA]</scope>
    <source>
        <tissue>Brain cortex</tissue>
    </source>
</reference>
<comment type="function">
    <text evidence="3">Component of the CCR4-NOT complex which is one of the major cellular mRNA deadenylases and is linked to various cellular processes including bulk mRNA degradation, miRNA-mediated repression, translational repression during translational initiation and general transcription regulation. Additional complex functions may be a consequence of its influence on mRNA expression. Involved in down-regulation of MYB- and JUN-dependent transcription. Enhances ligand-dependent transcriptional activity of nuclear hormone receptors. May play a role in cell differentiation.</text>
</comment>
<comment type="subunit">
    <text evidence="1">Homodimer. Component of the CCR4-NOT complex; distinct complexes seem to exist that differ in the participation of probably mutually exclusive catalytic subunits. Interacts with MYB, ATF2, RARA, RARB, RARG, RXRA, RXRB and RXRG. Identified in a complex with ATF2 bound to target DNA. Interacts with NANOS2. Directly interacts with ZNF335 (By similarity).</text>
</comment>
<comment type="subcellular location">
    <subcellularLocation>
        <location evidence="3">Nucleus</location>
    </subcellularLocation>
    <subcellularLocation>
        <location evidence="3">Cytoplasm</location>
        <location evidence="3">P-body</location>
    </subcellularLocation>
    <text evidence="3">NANOS2 promotes its localization to P-body.</text>
</comment>
<comment type="similarity">
    <text evidence="4">Belongs to the CNOT9 family.</text>
</comment>
<sequence length="299" mass="33631">MHSLATAAPVPTTLAQVDREKIYQWINELSSPETRENALLELSKKRESVPDLAPMLWHSFGTIAALLQEIVNIYPSINPPTLTAHQSNRVCNALALLQCVASHPETRSAFLAAHIPLFLYPFLHTVSKTRPFEYLRLTSLGVIGALVKTDEQEVINFLLTTEIIPLCLRIMESGSELSKTVATFILQKILLDDTGLAYICQTYERFSHVAMILGKMVLQLSKEPSARLLKHVVRCYLRLSDNPRAREALRQCLPDQLKDTTFAQVLKDDTTTKRWLAQLVKNLQEGQVTDPRGIPLPPQ</sequence>
<organism>
    <name type="scientific">Pongo abelii</name>
    <name type="common">Sumatran orangutan</name>
    <name type="synonym">Pongo pygmaeus abelii</name>
    <dbReference type="NCBI Taxonomy" id="9601"/>
    <lineage>
        <taxon>Eukaryota</taxon>
        <taxon>Metazoa</taxon>
        <taxon>Chordata</taxon>
        <taxon>Craniata</taxon>
        <taxon>Vertebrata</taxon>
        <taxon>Euteleostomi</taxon>
        <taxon>Mammalia</taxon>
        <taxon>Eutheria</taxon>
        <taxon>Euarchontoglires</taxon>
        <taxon>Primates</taxon>
        <taxon>Haplorrhini</taxon>
        <taxon>Catarrhini</taxon>
        <taxon>Hominidae</taxon>
        <taxon>Pongo</taxon>
    </lineage>
</organism>
<keyword id="KW-0007">Acetylation</keyword>
<keyword id="KW-0010">Activator</keyword>
<keyword id="KW-0963">Cytoplasm</keyword>
<keyword id="KW-0539">Nucleus</keyword>
<keyword id="KW-1185">Reference proteome</keyword>
<keyword id="KW-0678">Repressor</keyword>
<keyword id="KW-0943">RNA-mediated gene silencing</keyword>
<keyword id="KW-0804">Transcription</keyword>
<keyword id="KW-0805">Transcription regulation</keyword>
<keyword id="KW-0810">Translation regulation</keyword>
<evidence type="ECO:0000250" key="1"/>
<evidence type="ECO:0000250" key="2">
    <source>
        <dbReference type="UniProtKB" id="Q92600"/>
    </source>
</evidence>
<evidence type="ECO:0000250" key="3">
    <source>
        <dbReference type="UniProtKB" id="Q9JKY0"/>
    </source>
</evidence>
<evidence type="ECO:0000305" key="4"/>
<gene>
    <name evidence="2" type="primary">CNOT9</name>
    <name type="synonym">RCD1</name>
    <name type="synonym">RQCD1</name>
</gene>